<name>DAPH_STRU0</name>
<sequence>MTVQKMTAQEIIAFIGNAEKKTSVKVTFEGELSAPVPESVLKLGNVLFGDWKAIEPLLVDLKENVDFIVEQDGRNSAVPLLDKRRINARIEPGAIIRDQVVIGDNAVIMMGAIINIGAEIGPGTMIDMGAILGGRATVGKNSHIGAGAVLAGVIEPASAEPVRIGDNVLVGANAVVIEGVQVGNGSVVAAGAIVTEDVPENVVVAGVPARIIKEIDSQTQQKTALEDALRLI</sequence>
<feature type="chain" id="PRO_0000376722" description="2,3,4,5-tetrahydropyridine-2,6-dicarboxylate N-acetyltransferase">
    <location>
        <begin position="1"/>
        <end position="232"/>
    </location>
</feature>
<reference key="1">
    <citation type="journal article" date="2009" name="BMC Genomics">
        <title>Evidence for niche adaptation in the genome of the bovine pathogen Streptococcus uberis.</title>
        <authorList>
            <person name="Ward P.N."/>
            <person name="Holden M.T.G."/>
            <person name="Leigh J.A."/>
            <person name="Lennard N."/>
            <person name="Bignell A."/>
            <person name="Barron A."/>
            <person name="Clark L."/>
            <person name="Quail M.A."/>
            <person name="Woodward J."/>
            <person name="Barrell B.G."/>
            <person name="Egan S.A."/>
            <person name="Field T.R."/>
            <person name="Maskell D."/>
            <person name="Kehoe M."/>
            <person name="Dowson C.G."/>
            <person name="Chanter N."/>
            <person name="Whatmore A.M."/>
            <person name="Bentley S.D."/>
            <person name="Parkhill J."/>
        </authorList>
    </citation>
    <scope>NUCLEOTIDE SEQUENCE [LARGE SCALE GENOMIC DNA]</scope>
    <source>
        <strain>ATCC BAA-854 / 0140J</strain>
    </source>
</reference>
<proteinExistence type="inferred from homology"/>
<evidence type="ECO:0000255" key="1">
    <source>
        <dbReference type="HAMAP-Rule" id="MF_01691"/>
    </source>
</evidence>
<accession>B9DVY7</accession>
<comment type="function">
    <text evidence="1">Catalyzes the transfer of an acetyl group from acetyl-CoA to tetrahydrodipicolinate.</text>
</comment>
<comment type="catalytic activity">
    <reaction evidence="1">
        <text>(S)-2,3,4,5-tetrahydrodipicolinate + acetyl-CoA + H2O = L-2-acetamido-6-oxoheptanedioate + CoA</text>
        <dbReference type="Rhea" id="RHEA:13085"/>
        <dbReference type="ChEBI" id="CHEBI:15377"/>
        <dbReference type="ChEBI" id="CHEBI:16845"/>
        <dbReference type="ChEBI" id="CHEBI:57287"/>
        <dbReference type="ChEBI" id="CHEBI:57288"/>
        <dbReference type="ChEBI" id="CHEBI:58117"/>
        <dbReference type="EC" id="2.3.1.89"/>
    </reaction>
</comment>
<comment type="pathway">
    <text evidence="1">Amino-acid biosynthesis; L-lysine biosynthesis via DAP pathway; LL-2,6-diaminopimelate from (S)-tetrahydrodipicolinate (acetylase route): step 1/3.</text>
</comment>
<comment type="similarity">
    <text evidence="1">Belongs to the transferase hexapeptide repeat family. DapH subfamily.</text>
</comment>
<keyword id="KW-0012">Acyltransferase</keyword>
<keyword id="KW-0028">Amino-acid biosynthesis</keyword>
<keyword id="KW-0220">Diaminopimelate biosynthesis</keyword>
<keyword id="KW-0457">Lysine biosynthesis</keyword>
<keyword id="KW-1185">Reference proteome</keyword>
<keyword id="KW-0677">Repeat</keyword>
<keyword id="KW-0808">Transferase</keyword>
<organism>
    <name type="scientific">Streptococcus uberis (strain ATCC BAA-854 / 0140J)</name>
    <dbReference type="NCBI Taxonomy" id="218495"/>
    <lineage>
        <taxon>Bacteria</taxon>
        <taxon>Bacillati</taxon>
        <taxon>Bacillota</taxon>
        <taxon>Bacilli</taxon>
        <taxon>Lactobacillales</taxon>
        <taxon>Streptococcaceae</taxon>
        <taxon>Streptococcus</taxon>
    </lineage>
</organism>
<gene>
    <name evidence="1" type="primary">dapH</name>
    <name type="ordered locus">SUB1699</name>
</gene>
<protein>
    <recommendedName>
        <fullName evidence="1">2,3,4,5-tetrahydropyridine-2,6-dicarboxylate N-acetyltransferase</fullName>
        <ecNumber evidence="1">2.3.1.89</ecNumber>
    </recommendedName>
    <alternativeName>
        <fullName evidence="1">Tetrahydrodipicolinate N-acetyltransferase</fullName>
        <shortName evidence="1">THP acetyltransferase</shortName>
        <shortName evidence="1">Tetrahydropicolinate acetylase</shortName>
    </alternativeName>
</protein>
<dbReference type="EC" id="2.3.1.89" evidence="1"/>
<dbReference type="EMBL" id="AM946015">
    <property type="protein sequence ID" value="CAR43615.1"/>
    <property type="molecule type" value="Genomic_DNA"/>
</dbReference>
<dbReference type="SMR" id="B9DVY7"/>
<dbReference type="STRING" id="218495.SUB1699"/>
<dbReference type="KEGG" id="sub:SUB1699"/>
<dbReference type="eggNOG" id="COG2171">
    <property type="taxonomic scope" value="Bacteria"/>
</dbReference>
<dbReference type="HOGENOM" id="CLU_103751_0_0_9"/>
<dbReference type="OrthoDB" id="9788080at2"/>
<dbReference type="UniPathway" id="UPA00034">
    <property type="reaction ID" value="UER00022"/>
</dbReference>
<dbReference type="Proteomes" id="UP000000449">
    <property type="component" value="Chromosome"/>
</dbReference>
<dbReference type="GO" id="GO:0047200">
    <property type="term" value="F:tetrahydrodipicolinate N-acetyltransferase activity"/>
    <property type="evidence" value="ECO:0007669"/>
    <property type="project" value="UniProtKB-EC"/>
</dbReference>
<dbReference type="GO" id="GO:0019877">
    <property type="term" value="P:diaminopimelate biosynthetic process"/>
    <property type="evidence" value="ECO:0007669"/>
    <property type="project" value="UniProtKB-UniRule"/>
</dbReference>
<dbReference type="GO" id="GO:0009089">
    <property type="term" value="P:lysine biosynthetic process via diaminopimelate"/>
    <property type="evidence" value="ECO:0007669"/>
    <property type="project" value="UniProtKB-UniRule"/>
</dbReference>
<dbReference type="Gene3D" id="2.160.10.10">
    <property type="entry name" value="Hexapeptide repeat proteins"/>
    <property type="match status" value="1"/>
</dbReference>
<dbReference type="Gene3D" id="3.30.70.250">
    <property type="entry name" value="Malonyl-CoA ACP transacylase, ACP-binding"/>
    <property type="match status" value="1"/>
</dbReference>
<dbReference type="HAMAP" id="MF_01691">
    <property type="entry name" value="DapH"/>
    <property type="match status" value="1"/>
</dbReference>
<dbReference type="InterPro" id="IPR019873">
    <property type="entry name" value="DapH"/>
</dbReference>
<dbReference type="InterPro" id="IPR013710">
    <property type="entry name" value="DapH_N"/>
</dbReference>
<dbReference type="InterPro" id="IPR001451">
    <property type="entry name" value="Hexapep"/>
</dbReference>
<dbReference type="InterPro" id="IPR018357">
    <property type="entry name" value="Hexapep_transf_CS"/>
</dbReference>
<dbReference type="InterPro" id="IPR050179">
    <property type="entry name" value="Trans_hexapeptide_repeat"/>
</dbReference>
<dbReference type="InterPro" id="IPR011004">
    <property type="entry name" value="Trimer_LpxA-like_sf"/>
</dbReference>
<dbReference type="NCBIfam" id="TIGR03532">
    <property type="entry name" value="DapD_Ac"/>
    <property type="match status" value="1"/>
</dbReference>
<dbReference type="PANTHER" id="PTHR43300:SF10">
    <property type="entry name" value="2,3,4,5-TETRAHYDROPYRIDINE-2,6-DICARBOXYLATE N-ACETYLTRANSFERASE"/>
    <property type="match status" value="1"/>
</dbReference>
<dbReference type="PANTHER" id="PTHR43300">
    <property type="entry name" value="ACETYLTRANSFERASE"/>
    <property type="match status" value="1"/>
</dbReference>
<dbReference type="Pfam" id="PF08503">
    <property type="entry name" value="DapH_N"/>
    <property type="match status" value="1"/>
</dbReference>
<dbReference type="Pfam" id="PF00132">
    <property type="entry name" value="Hexapep"/>
    <property type="match status" value="1"/>
</dbReference>
<dbReference type="Pfam" id="PF14602">
    <property type="entry name" value="Hexapep_2"/>
    <property type="match status" value="1"/>
</dbReference>
<dbReference type="SUPFAM" id="SSF51161">
    <property type="entry name" value="Trimeric LpxA-like enzymes"/>
    <property type="match status" value="1"/>
</dbReference>
<dbReference type="PROSITE" id="PS00101">
    <property type="entry name" value="HEXAPEP_TRANSFERASES"/>
    <property type="match status" value="2"/>
</dbReference>